<organism>
    <name type="scientific">Chloroflexus aurantiacus (strain ATCC 29366 / DSM 635 / J-10-fl)</name>
    <dbReference type="NCBI Taxonomy" id="324602"/>
    <lineage>
        <taxon>Bacteria</taxon>
        <taxon>Bacillati</taxon>
        <taxon>Chloroflexota</taxon>
        <taxon>Chloroflexia</taxon>
        <taxon>Chloroflexales</taxon>
        <taxon>Chloroflexineae</taxon>
        <taxon>Chloroflexaceae</taxon>
        <taxon>Chloroflexus</taxon>
    </lineage>
</organism>
<keyword id="KW-0378">Hydrolase</keyword>
<keyword id="KW-0408">Iron</keyword>
<keyword id="KW-0479">Metal-binding</keyword>
<keyword id="KW-0648">Protein biosynthesis</keyword>
<keyword id="KW-1185">Reference proteome</keyword>
<gene>
    <name evidence="1" type="primary">def</name>
    <name type="ordered locus">Caur_3094</name>
</gene>
<sequence length="188" mass="21394">MAIRRILRIDDAEDRKILKMQCRPVKLPDRNLKQLVADMFETMRAAHGVGLAAPQIGIPIQLCIIEIPAEYEERADGSVVEVAPAEPYVLINPRIVKMSGEEVMRDEGCLSLPGWYGMVPRQTWVTVEFQDLNGKHHRLRRAGDLLGWAIQHEVDHLNGILFTERIRDLSTLRDITKERDAQPVDQAP</sequence>
<reference key="1">
    <citation type="journal article" date="2011" name="BMC Genomics">
        <title>Complete genome sequence of the filamentous anoxygenic phototrophic bacterium Chloroflexus aurantiacus.</title>
        <authorList>
            <person name="Tang K.H."/>
            <person name="Barry K."/>
            <person name="Chertkov O."/>
            <person name="Dalin E."/>
            <person name="Han C.S."/>
            <person name="Hauser L.J."/>
            <person name="Honchak B.M."/>
            <person name="Karbach L.E."/>
            <person name="Land M.L."/>
            <person name="Lapidus A."/>
            <person name="Larimer F.W."/>
            <person name="Mikhailova N."/>
            <person name="Pitluck S."/>
            <person name="Pierson B.K."/>
            <person name="Blankenship R.E."/>
        </authorList>
    </citation>
    <scope>NUCLEOTIDE SEQUENCE [LARGE SCALE GENOMIC DNA]</scope>
    <source>
        <strain>ATCC 29366 / DSM 635 / J-10-fl</strain>
    </source>
</reference>
<feature type="chain" id="PRO_1000200722" description="Peptide deformylase">
    <location>
        <begin position="1"/>
        <end position="188"/>
    </location>
</feature>
<feature type="active site" evidence="1">
    <location>
        <position position="153"/>
    </location>
</feature>
<feature type="binding site" evidence="1">
    <location>
        <position position="109"/>
    </location>
    <ligand>
        <name>Fe cation</name>
        <dbReference type="ChEBI" id="CHEBI:24875"/>
    </ligand>
</feature>
<feature type="binding site" evidence="1">
    <location>
        <position position="152"/>
    </location>
    <ligand>
        <name>Fe cation</name>
        <dbReference type="ChEBI" id="CHEBI:24875"/>
    </ligand>
</feature>
<feature type="binding site" evidence="1">
    <location>
        <position position="156"/>
    </location>
    <ligand>
        <name>Fe cation</name>
        <dbReference type="ChEBI" id="CHEBI:24875"/>
    </ligand>
</feature>
<name>DEF_CHLAA</name>
<accession>A9WHG7</accession>
<dbReference type="EC" id="3.5.1.88" evidence="1"/>
<dbReference type="EMBL" id="CP000909">
    <property type="protein sequence ID" value="ABY36293.1"/>
    <property type="molecule type" value="Genomic_DNA"/>
</dbReference>
<dbReference type="RefSeq" id="WP_012258946.1">
    <property type="nucleotide sequence ID" value="NC_010175.1"/>
</dbReference>
<dbReference type="RefSeq" id="YP_001636682.1">
    <property type="nucleotide sequence ID" value="NC_010175.1"/>
</dbReference>
<dbReference type="SMR" id="A9WHG7"/>
<dbReference type="FunCoup" id="A9WHG7">
    <property type="interactions" value="407"/>
</dbReference>
<dbReference type="STRING" id="324602.Caur_3094"/>
<dbReference type="EnsemblBacteria" id="ABY36293">
    <property type="protein sequence ID" value="ABY36293"/>
    <property type="gene ID" value="Caur_3094"/>
</dbReference>
<dbReference type="KEGG" id="cau:Caur_3094"/>
<dbReference type="PATRIC" id="fig|324602.8.peg.3498"/>
<dbReference type="eggNOG" id="COG0242">
    <property type="taxonomic scope" value="Bacteria"/>
</dbReference>
<dbReference type="HOGENOM" id="CLU_061901_2_0_0"/>
<dbReference type="InParanoid" id="A9WHG7"/>
<dbReference type="Proteomes" id="UP000002008">
    <property type="component" value="Chromosome"/>
</dbReference>
<dbReference type="GO" id="GO:0046872">
    <property type="term" value="F:metal ion binding"/>
    <property type="evidence" value="ECO:0007669"/>
    <property type="project" value="UniProtKB-KW"/>
</dbReference>
<dbReference type="GO" id="GO:0042586">
    <property type="term" value="F:peptide deformylase activity"/>
    <property type="evidence" value="ECO:0000318"/>
    <property type="project" value="GO_Central"/>
</dbReference>
<dbReference type="GO" id="GO:0043686">
    <property type="term" value="P:co-translational protein modification"/>
    <property type="evidence" value="ECO:0000318"/>
    <property type="project" value="GO_Central"/>
</dbReference>
<dbReference type="GO" id="GO:0006412">
    <property type="term" value="P:translation"/>
    <property type="evidence" value="ECO:0007669"/>
    <property type="project" value="UniProtKB-UniRule"/>
</dbReference>
<dbReference type="CDD" id="cd00487">
    <property type="entry name" value="Pep_deformylase"/>
    <property type="match status" value="1"/>
</dbReference>
<dbReference type="FunFam" id="3.90.45.10:FF:000018">
    <property type="entry name" value="Peptide deformylase"/>
    <property type="match status" value="1"/>
</dbReference>
<dbReference type="Gene3D" id="3.90.45.10">
    <property type="entry name" value="Peptide deformylase"/>
    <property type="match status" value="1"/>
</dbReference>
<dbReference type="HAMAP" id="MF_00163">
    <property type="entry name" value="Pep_deformylase"/>
    <property type="match status" value="1"/>
</dbReference>
<dbReference type="InterPro" id="IPR023635">
    <property type="entry name" value="Peptide_deformylase"/>
</dbReference>
<dbReference type="InterPro" id="IPR036821">
    <property type="entry name" value="Peptide_deformylase_sf"/>
</dbReference>
<dbReference type="NCBIfam" id="TIGR00079">
    <property type="entry name" value="pept_deformyl"/>
    <property type="match status" value="1"/>
</dbReference>
<dbReference type="NCBIfam" id="NF001159">
    <property type="entry name" value="PRK00150.1-3"/>
    <property type="match status" value="1"/>
</dbReference>
<dbReference type="PANTHER" id="PTHR10458">
    <property type="entry name" value="PEPTIDE DEFORMYLASE"/>
    <property type="match status" value="1"/>
</dbReference>
<dbReference type="PANTHER" id="PTHR10458:SF22">
    <property type="entry name" value="PEPTIDE DEFORMYLASE"/>
    <property type="match status" value="1"/>
</dbReference>
<dbReference type="Pfam" id="PF01327">
    <property type="entry name" value="Pep_deformylase"/>
    <property type="match status" value="1"/>
</dbReference>
<dbReference type="PIRSF" id="PIRSF004749">
    <property type="entry name" value="Pep_def"/>
    <property type="match status" value="1"/>
</dbReference>
<dbReference type="PRINTS" id="PR01576">
    <property type="entry name" value="PDEFORMYLASE"/>
</dbReference>
<dbReference type="SUPFAM" id="SSF56420">
    <property type="entry name" value="Peptide deformylase"/>
    <property type="match status" value="1"/>
</dbReference>
<protein>
    <recommendedName>
        <fullName evidence="1">Peptide deformylase</fullName>
        <shortName evidence="1">PDF</shortName>
        <ecNumber evidence="1">3.5.1.88</ecNumber>
    </recommendedName>
    <alternativeName>
        <fullName evidence="1">Polypeptide deformylase</fullName>
    </alternativeName>
</protein>
<comment type="function">
    <text evidence="1">Removes the formyl group from the N-terminal Met of newly synthesized proteins. Requires at least a dipeptide for an efficient rate of reaction. N-terminal L-methionine is a prerequisite for activity but the enzyme has broad specificity at other positions.</text>
</comment>
<comment type="catalytic activity">
    <reaction evidence="1">
        <text>N-terminal N-formyl-L-methionyl-[peptide] + H2O = N-terminal L-methionyl-[peptide] + formate</text>
        <dbReference type="Rhea" id="RHEA:24420"/>
        <dbReference type="Rhea" id="RHEA-COMP:10639"/>
        <dbReference type="Rhea" id="RHEA-COMP:10640"/>
        <dbReference type="ChEBI" id="CHEBI:15377"/>
        <dbReference type="ChEBI" id="CHEBI:15740"/>
        <dbReference type="ChEBI" id="CHEBI:49298"/>
        <dbReference type="ChEBI" id="CHEBI:64731"/>
        <dbReference type="EC" id="3.5.1.88"/>
    </reaction>
</comment>
<comment type="cofactor">
    <cofactor evidence="1">
        <name>Fe(2+)</name>
        <dbReference type="ChEBI" id="CHEBI:29033"/>
    </cofactor>
    <text evidence="1">Binds 1 Fe(2+) ion.</text>
</comment>
<comment type="similarity">
    <text evidence="1">Belongs to the polypeptide deformylase family.</text>
</comment>
<evidence type="ECO:0000255" key="1">
    <source>
        <dbReference type="HAMAP-Rule" id="MF_00163"/>
    </source>
</evidence>
<proteinExistence type="inferred from homology"/>